<gene>
    <name evidence="15 21" type="primary">Muc2</name>
</gene>
<proteinExistence type="evidence at protein level"/>
<evidence type="ECO:0000250" key="1">
    <source>
        <dbReference type="UniProtKB" id="Q02817"/>
    </source>
</evidence>
<evidence type="ECO:0000250" key="2">
    <source>
        <dbReference type="UniProtKB" id="Q9HC84"/>
    </source>
</evidence>
<evidence type="ECO:0000255" key="3"/>
<evidence type="ECO:0000255" key="4">
    <source>
        <dbReference type="PROSITE-ProRule" id="PRU00039"/>
    </source>
</evidence>
<evidence type="ECO:0000255" key="5">
    <source>
        <dbReference type="PROSITE-ProRule" id="PRU00220"/>
    </source>
</evidence>
<evidence type="ECO:0000255" key="6">
    <source>
        <dbReference type="PROSITE-ProRule" id="PRU00498"/>
    </source>
</evidence>
<evidence type="ECO:0000255" key="7">
    <source>
        <dbReference type="PROSITE-ProRule" id="PRU00580"/>
    </source>
</evidence>
<evidence type="ECO:0000256" key="8">
    <source>
        <dbReference type="SAM" id="MobiDB-lite"/>
    </source>
</evidence>
<evidence type="ECO:0000269" key="9">
    <source>
    </source>
</evidence>
<evidence type="ECO:0000269" key="10">
    <source>
    </source>
</evidence>
<evidence type="ECO:0000269" key="11">
    <source>
    </source>
</evidence>
<evidence type="ECO:0000269" key="12">
    <source>
    </source>
</evidence>
<evidence type="ECO:0000269" key="13">
    <source>
    </source>
</evidence>
<evidence type="ECO:0000269" key="14">
    <source>
    </source>
</evidence>
<evidence type="ECO:0000303" key="15">
    <source>
    </source>
</evidence>
<evidence type="ECO:0000305" key="16"/>
<evidence type="ECO:0000312" key="17">
    <source>
        <dbReference type="EMBL" id="AAD01593.1"/>
    </source>
</evidence>
<evidence type="ECO:0000312" key="18">
    <source>
        <dbReference type="EMBL" id="AAH30862.1"/>
    </source>
</evidence>
<evidence type="ECO:0000312" key="19">
    <source>
        <dbReference type="EMBL" id="BAB25557.1"/>
    </source>
</evidence>
<evidence type="ECO:0000312" key="20">
    <source>
        <dbReference type="EMBL" id="CAD54414.1"/>
    </source>
</evidence>
<evidence type="ECO:0000312" key="21">
    <source>
        <dbReference type="MGI" id="MGI:1339364"/>
    </source>
</evidence>
<sequence>MGLPLARLVAACLVLALAKGSELQKEARSRNHVCSTWGDFHYKTFDGDVYRFPGLCDYNFASDCRDSYKEFAVHLKRGLGEAGGHSQIESILITIKDDTIYLTHKLAVVNGAMVSTPHYSSGLLIEKNDAYTKVYSRAGLSLMWNREDALMVELDSRFQNHTCGLCGDFNGMQTNYEFLSEEGIQFSAIEFGNMQKINKPEVQCEDPEAVQEPESCSEHRAECERLLTSAAFEDCQTRVPVESYVRACMHDRCQCPKGGACECSTLAEFSRQCSHAGGRPENWRTASLCPKKCPNNMVYLESSSPCVDTCSHLEVSSLCEEHYMDGCFCPEGTVYDDITGSGCIPVSQCHCKLHGHLYMPGQEFTNDCEQCVCNAGRWVCKDLPCPETCALEGGSHITTFDGKKFTFHGDCYYVLTKSEHNDSYALLGELASCGSTDKQTCLKTVVLLTDDKKNVVAFKSGGSVLLNEMEVTLPHVAASFSIFQPSSYHIVVNTKFGLRLQIQLLPVMQLFVTLDQAAQGQVQGLCGNFNGLESDDFMTSGGMVEATGAGFANTWKAQSSCHDKLDWLDDPCSLNIESANYAEHWCSLLKRSETPFARCHLAVDPTEYYKRCKYDTCNCQNNEDCMCAALSSYARACAAKGVMLWGWRERVCNKDVHACPSSQIFMYNLTTCQQTCRSLSEGDSHCLKGFAPVEGCGCPDHTFMDEKGRCVPLAKCSCYHHGLYLEAGDVILRQEERCICRNGRLQCTQVKLIGHTCQYPKILVDCNNLTALAVRKPRPTSCQTLVAGYYHTECISGCVCPDGLLDDGRGGCVEEDKCPCIHNKDLYSSGESIKLDCNNTCTCQKGRWECTRYACHSTCSIYGSGHYITFDGKHYDFDGHCSYVAVQDYCGQNSTGSFSIITENVPCGTTGVTCSKAIKIFIGGTELKLVDKHRVVKQLEEGHHVPYITREVGQYLVVEASSGIIVIWDKKTTIFIKLDPSYKGTVCGLCGNFDDQTKNDFTTRDHMVVTSELDFGNSWKEASTCPDVSHNPDPCSLNPHRRSWAEKQCSIIKSRVFKVCHSKVDPTVFYEACVHDSCSCDTGGDCDCFCSAVASYAQECTKAEACVFWRTPDLCPIFCDYYNPPDECEWHYEPCGNRSFETCRTLNGIHSNISVSYLEGCYPRCPEDRPIYDEDLKKCVTGDKCGCYIEDTRYPPGGSVPTDEICKSCTCTNTSKIECHPDEGKILNMTQDGIFCYWEFCGPNGTVGQHFNICGSSTAIPSTTTSFTTISTPISTTPISTTITTTTVTMTTEQVPCCFWSDWINKYHPTKENGGDRETFTHVCSAPEDIECRAATDPKLSWEELGQKVQCNVSTGLICNNEDQYGIGEFELCYDYEIRVNCCYPMEYCTPSTISPTTSTTTLSTTPPTSSPTTLPTSSPVTSSATLPTTSSITSTISPTTSPTTPLTTSPTTSPTTSPTTPSTTSPTTPTTTSPTTPSTTSPTTPSTTPSTTSPTTPSTTSPTTPTSTSPNTQSTTSPTTSPTTPSTTSPTTSPTTPSTTSPTISTTTSTISPTTPSTTSPNTPSTTSSTIPSTTSPTTPSTTSPTISTTTSTTSPTTPSTTSPTTPSTTSPTTPSTTSPTISTTTLTTSPTTPSTTSPTTPSTTSPTTPSTTSPTISITTSTISPTTPSTTSPTTLSTTSPTTPSTTSPTISTTTSTSPTTPSTTSPTTPSTPSSTTPSTTSPTTPSTTSPTISTTSSTISPTTPSTTSPTTPSTTSPTTPSTTSPTISTTTSTISPTTPSTTSPTTPSTTSPTTPSTTSPTISTTTSTISPTTPSTTSPTTPSTTSPNTPSTTSTTTSTTSPTTPSTTSPTISTTTSTTSPTTPSTTSPTISTTTSTTSPTTPSTTSPTTPSTTSPTTPSTTSPTTPSTTSPTISTTSSTISPTTPSTTSPTTPSTTSPTTPSTTSPTISTTTSTTSPTTPSTTSPTISTTTSTISPTTPSTSSPTTPSTTSPTTPSTTSPTISTTTSTTSPTTPSTTSPTTPSTTSPTISTTTSTTSPTTPSTTSPTISTTTSTTSPTTPSTTSPTTPSTTSPTTPSTTSPTTPSTTSPTISTTSSTISPTTPSTTSPTTPSTTSPTTPSTTSPTISTTTSTTSPTTPSTTSPTISTTTSTTSPTTPSTTSPTTPSTTSPTTPSTTSPTTPSTTSPTISTTSSTISPTTPSTTSPTTPSTTSPTTPSTTSPTISTTTSTTSPTTPSTTSPTISTTTSTISPTTPSTTSPITPSTTSPTTPSTTSPTISTTTSTTSPTTPSTTSPTISTTTSTISPTTPSTTSPITPSTTSPTTPSTTSPTISTTTSTISPTTPSTTSPTTPSTTSPTTLSTTSPTISTTTSTISPTTPSTTSPTTPSTTSPTTPSTTSPTTPSTTSPTISTTTSTISPTTSPTTPSTTSPTTHSTTSPTTPSTTSPTISTTTSTISPTTPSTTSLTTPSTTSPTTPSTTSPTTPSTTSPTISTTTSTISPTTPSTTSPTTPSTTSPTTPSTTSPNISTTTSTISPTTPSTTSPTTPSTTSPTTPSTTSPTISTTTSTISPTTPSTTSPTTPSTTSPTTPSTTSPTTPSTTSPTISTTTSTISPTTPSTTSPTTPSTTSPTTQSTTSPTISTNTPSTTSPTTPSTTSPTISTTTSTISPTTPSTTSPTTPSTTSPTTSSTTSPTISTTTSTISPTTPSTTSPTTPSTTSPTTPLTTSPTISTTTSTISPTTPSTTSPTTPSTTSPTTPSTTSPTTPSTTSPTISTTTSTISPTTPSTTSPTTSPTTPSTTSPTTSSTATQTISVTTSQTSSSATPPNSSPTSSATTSPTTSSGTSTATSPSTSPTTSSTFTTPPSTTCIDDCKWTGWLDSGKPTYDIKSGDFELIKGVCEPHWEVQNISCRAVMHSNIPLDQLGQIVVCNKEVGLVCKNEDQEIGGIIPMRMCLNYEINVYCCNPICFTSTPSSTTTETPTTTSTTKTSILTSTTTQTPSPSPTTTVTPTPAPTTTQIPTSTSTTTQTTTPTPITETSTPTSTISQTPSPASTTTVTPATTSTTTETSTSTSTTTQTTSPTPTVTETSTPRSTTTQTPSPVPTTTVTSTPTPTIGETTTPTTTITETFTPRSTTTQTSSPVPSTTVTPTPTPITTETSTSTPTTTQTTTPTPITETSTPISTTTHTPSPSSTTSTTSTQTPTPTTTGPSTSTSTTIQTTTPTPITETFTPTSTTTQTPSSTPTTTVTPTPTTTETSTSTSTTTQTTTPTPITETFTPTSTTTQTPSPTPTTTVNPTPTPTTIGPSTSTSTTTQTTTPTPTGTETSTPTSTTTQTPSPTPTTTVTPTPSPTTTETSTSTTTQTTTPTPTGTETSTPTSTTTQTPSPTPTTTVTPTPSPTTTETSTSTTTQTTTPTPITETSTPTSTTTQTPSPTPTTTVTPTSTPTTTGTSTSTSTTTQTTTPTPTGTETFTPRSTTTQTPSSSSTTSGTPTPTPTTTHTSTLTSTTEASTPTPIIETSTPKSTTIQTPSPSPTTTVTSPTTPTTTVKETSTPTNTVPTTGSTSSKPPTESSTPVTSQSTPSPPTESTTLSSTPVTTATSSTASSPGTTSPFVTSSAGSTPSSPPGSTPGPTTSSGMPTSSKTTTGPTSPTTRPPSTSTPTSFTVPTETTTQTRPLSTTPTTLETTRTSSWGTFSSTSPITSPSTVWTHTETQVTCCVLNEMFYGPGELVYNSTHGGTCFYVNCSLDCHLQFFNWSCPSTPSTPTPSTPTPTPSQTTTPSTTSSKSTPSTPQSTSPKSTLSTPTKTTPYGCPDFDPPRQVNETWWLCNCTMAICNHDNVVEIVPLKCDPPPMPTCANGLKPVRVPDADNCCWHWECDCYCTGWGDPHFVTFDGLYYSYQGNCTYVLVEEITPTVDNFGVYIDNYHCDANDKVSCPRTLIVRHETQEVQIKTVRMMPIEVEVQVNKQLVALPYKKYGLEVYESGINIVVNISRLEAKISYNGLSFSIRLPYKLFGNNTKGQCGTCTNNTADDCILPSGKIISDCEIAADEWLVNDPSKPHCPHKGLTTKRPATTTPGLSLNNCTVSPVCHLIMDSLFSQCHAFVPPKHYYEACLFDSCYVPGSNMECASVQAYATLCAKEGVCIDWRNHTQGVCSVKCPPHKQYQACGPEEEPTCQPSSSQNSTLLVEGCFCPEGTTKFAPGYDVCVKTCGCVGPDNVPREFGEHFEFDCKDCVCREGGSGIVCQPKKCSGGNQTTCEEDGTYLVVETNPDDKCCNITSCKCDTKRCKAERPTCLLGFEVKTEIVPGKCCPVYSCVPKGVCVHQNAEYQPGSPVYSNKCQDCVCTNILDNSTQLNVISCTHVPCNISCSSGFELVDVPGECCKKCQQTHCIIEGPKQQYIILKPGEIHKNPSNKCTFFSCMKINNQLISSVSNITCPDFNPSDCVSGSITYMPNGCCKTCIPQNQTRVPCSAVSVMKEISYNGCTKNISMNYCFGSCGTFAMYSAQVQGLDHRCSCCKEEKTSVRSVTLECPDGSELSHTYTHIESCLCQDTVCGLPQAQQVRTRRSSPRFLGRK</sequence>
<reference evidence="16 20" key="1">
    <citation type="journal article" date="2004" name="Biochim. Biophys. Acta">
        <title>The mouse secreted gel-forming mucin gene cluster.</title>
        <authorList>
            <person name="Escande F."/>
            <person name="Porchet N."/>
            <person name="Bernigaud A."/>
            <person name="Petitprez D."/>
            <person name="Aubert J.-P."/>
            <person name="Buisine M.-P."/>
        </authorList>
    </citation>
    <scope>NUCLEOTIDE SEQUENCE [GENOMIC DNA] OF 1-1442 AND 3655-4576</scope>
    <scope>TISSUE SPECIFICITY</scope>
    <source>
        <strain evidence="20">C57BL/6J</strain>
    </source>
</reference>
<reference evidence="16 17" key="2">
    <citation type="journal article" date="1999" name="Am. J. Physiol.">
        <title>Gastrointestinal expression and partial cDNA cloning of murine Muc2.</title>
        <authorList>
            <person name="van Klinken B.J.-W."/>
            <person name="Einerhand A.W.C."/>
            <person name="Duits L.A."/>
            <person name="Makkink M.K."/>
            <person name="Tytgat K.M.A.J."/>
            <person name="Renes I.B."/>
            <person name="Verburg M."/>
            <person name="Bueller H.A."/>
            <person name="Dekker J."/>
        </authorList>
    </citation>
    <scope>NUCLEOTIDE SEQUENCE [MRNA] OF 1-301</scope>
    <scope>TISSUE SPECIFICITY</scope>
    <scope>GLYCOSYLATION</scope>
    <source>
        <strain evidence="17">129</strain>
        <tissue evidence="17">Colon</tissue>
    </source>
</reference>
<reference evidence="16 18" key="3">
    <citation type="journal article" date="2004" name="Genome Res.">
        <title>The status, quality, and expansion of the NIH full-length cDNA project: the Mammalian Gene Collection (MGC).</title>
        <authorList>
            <consortium name="The MGC Project Team"/>
        </authorList>
    </citation>
    <scope>NUCLEOTIDE SEQUENCE [LARGE SCALE MRNA] OF 2809-3654 AND 3691-4576</scope>
    <source>
        <strain evidence="18">FVB/N</strain>
        <tissue evidence="18">Colon</tissue>
    </source>
</reference>
<reference evidence="16 19" key="4">
    <citation type="journal article" date="2005" name="Science">
        <title>The transcriptional landscape of the mammalian genome.</title>
        <authorList>
            <person name="Carninci P."/>
            <person name="Kasukawa T."/>
            <person name="Katayama S."/>
            <person name="Gough J."/>
            <person name="Frith M.C."/>
            <person name="Maeda N."/>
            <person name="Oyama R."/>
            <person name="Ravasi T."/>
            <person name="Lenhard B."/>
            <person name="Wells C."/>
            <person name="Kodzius R."/>
            <person name="Shimokawa K."/>
            <person name="Bajic V.B."/>
            <person name="Brenner S.E."/>
            <person name="Batalov S."/>
            <person name="Forrest A.R."/>
            <person name="Zavolan M."/>
            <person name="Davis M.J."/>
            <person name="Wilming L.G."/>
            <person name="Aidinis V."/>
            <person name="Allen J.E."/>
            <person name="Ambesi-Impiombato A."/>
            <person name="Apweiler R."/>
            <person name="Aturaliya R.N."/>
            <person name="Bailey T.L."/>
            <person name="Bansal M."/>
            <person name="Baxter L."/>
            <person name="Beisel K.W."/>
            <person name="Bersano T."/>
            <person name="Bono H."/>
            <person name="Chalk A.M."/>
            <person name="Chiu K.P."/>
            <person name="Choudhary V."/>
            <person name="Christoffels A."/>
            <person name="Clutterbuck D.R."/>
            <person name="Crowe M.L."/>
            <person name="Dalla E."/>
            <person name="Dalrymple B.P."/>
            <person name="de Bono B."/>
            <person name="Della Gatta G."/>
            <person name="di Bernardo D."/>
            <person name="Down T."/>
            <person name="Engstrom P."/>
            <person name="Fagiolini M."/>
            <person name="Faulkner G."/>
            <person name="Fletcher C.F."/>
            <person name="Fukushima T."/>
            <person name="Furuno M."/>
            <person name="Futaki S."/>
            <person name="Gariboldi M."/>
            <person name="Georgii-Hemming P."/>
            <person name="Gingeras T.R."/>
            <person name="Gojobori T."/>
            <person name="Green R.E."/>
            <person name="Gustincich S."/>
            <person name="Harbers M."/>
            <person name="Hayashi Y."/>
            <person name="Hensch T.K."/>
            <person name="Hirokawa N."/>
            <person name="Hill D."/>
            <person name="Huminiecki L."/>
            <person name="Iacono M."/>
            <person name="Ikeo K."/>
            <person name="Iwama A."/>
            <person name="Ishikawa T."/>
            <person name="Jakt M."/>
            <person name="Kanapin A."/>
            <person name="Katoh M."/>
            <person name="Kawasawa Y."/>
            <person name="Kelso J."/>
            <person name="Kitamura H."/>
            <person name="Kitano H."/>
            <person name="Kollias G."/>
            <person name="Krishnan S.P."/>
            <person name="Kruger A."/>
            <person name="Kummerfeld S.K."/>
            <person name="Kurochkin I.V."/>
            <person name="Lareau L.F."/>
            <person name="Lazarevic D."/>
            <person name="Lipovich L."/>
            <person name="Liu J."/>
            <person name="Liuni S."/>
            <person name="McWilliam S."/>
            <person name="Madan Babu M."/>
            <person name="Madera M."/>
            <person name="Marchionni L."/>
            <person name="Matsuda H."/>
            <person name="Matsuzawa S."/>
            <person name="Miki H."/>
            <person name="Mignone F."/>
            <person name="Miyake S."/>
            <person name="Morris K."/>
            <person name="Mottagui-Tabar S."/>
            <person name="Mulder N."/>
            <person name="Nakano N."/>
            <person name="Nakauchi H."/>
            <person name="Ng P."/>
            <person name="Nilsson R."/>
            <person name="Nishiguchi S."/>
            <person name="Nishikawa S."/>
            <person name="Nori F."/>
            <person name="Ohara O."/>
            <person name="Okazaki Y."/>
            <person name="Orlando V."/>
            <person name="Pang K.C."/>
            <person name="Pavan W.J."/>
            <person name="Pavesi G."/>
            <person name="Pesole G."/>
            <person name="Petrovsky N."/>
            <person name="Piazza S."/>
            <person name="Reed J."/>
            <person name="Reid J.F."/>
            <person name="Ring B.Z."/>
            <person name="Ringwald M."/>
            <person name="Rost B."/>
            <person name="Ruan Y."/>
            <person name="Salzberg S.L."/>
            <person name="Sandelin A."/>
            <person name="Schneider C."/>
            <person name="Schoenbach C."/>
            <person name="Sekiguchi K."/>
            <person name="Semple C.A."/>
            <person name="Seno S."/>
            <person name="Sessa L."/>
            <person name="Sheng Y."/>
            <person name="Shibata Y."/>
            <person name="Shimada H."/>
            <person name="Shimada K."/>
            <person name="Silva D."/>
            <person name="Sinclair B."/>
            <person name="Sperling S."/>
            <person name="Stupka E."/>
            <person name="Sugiura K."/>
            <person name="Sultana R."/>
            <person name="Takenaka Y."/>
            <person name="Taki K."/>
            <person name="Tammoja K."/>
            <person name="Tan S.L."/>
            <person name="Tang S."/>
            <person name="Taylor M.S."/>
            <person name="Tegner J."/>
            <person name="Teichmann S.A."/>
            <person name="Ueda H.R."/>
            <person name="van Nimwegen E."/>
            <person name="Verardo R."/>
            <person name="Wei C.L."/>
            <person name="Yagi K."/>
            <person name="Yamanishi H."/>
            <person name="Zabarovsky E."/>
            <person name="Zhu S."/>
            <person name="Zimmer A."/>
            <person name="Hide W."/>
            <person name="Bult C."/>
            <person name="Grimmond S.M."/>
            <person name="Teasdale R.D."/>
            <person name="Liu E.T."/>
            <person name="Brusic V."/>
            <person name="Quackenbush J."/>
            <person name="Wahlestedt C."/>
            <person name="Mattick J.S."/>
            <person name="Hume D.A."/>
            <person name="Kai C."/>
            <person name="Sasaki D."/>
            <person name="Tomaru Y."/>
            <person name="Fukuda S."/>
            <person name="Kanamori-Katayama M."/>
            <person name="Suzuki M."/>
            <person name="Aoki J."/>
            <person name="Arakawa T."/>
            <person name="Iida J."/>
            <person name="Imamura K."/>
            <person name="Itoh M."/>
            <person name="Kato T."/>
            <person name="Kawaji H."/>
            <person name="Kawagashira N."/>
            <person name="Kawashima T."/>
            <person name="Kojima M."/>
            <person name="Kondo S."/>
            <person name="Konno H."/>
            <person name="Nakano K."/>
            <person name="Ninomiya N."/>
            <person name="Nishio T."/>
            <person name="Okada M."/>
            <person name="Plessy C."/>
            <person name="Shibata K."/>
            <person name="Shiraki T."/>
            <person name="Suzuki S."/>
            <person name="Tagami M."/>
            <person name="Waki K."/>
            <person name="Watahiki A."/>
            <person name="Okamura-Oho Y."/>
            <person name="Suzuki H."/>
            <person name="Kawai J."/>
            <person name="Hayashizaki Y."/>
        </authorList>
    </citation>
    <scope>NUCLEOTIDE SEQUENCE [LARGE SCALE MRNA] OF 4095-4576</scope>
    <source>
        <strain evidence="19">C57BL/6J</strain>
        <tissue evidence="19">Small intestine</tissue>
    </source>
</reference>
<reference evidence="16" key="5">
    <citation type="journal article" date="2002" name="Science">
        <title>Colorectal cancer in mice genetically deficient in the mucin Muc2.</title>
        <authorList>
            <person name="Velcich A."/>
            <person name="Yang W."/>
            <person name="Heyer J."/>
            <person name="Fragale A."/>
            <person name="Nicholas C."/>
            <person name="Viani S."/>
            <person name="Kucherlapati R."/>
            <person name="Lipkin M."/>
            <person name="Yang K."/>
            <person name="Augenlicht L."/>
        </authorList>
    </citation>
    <scope>DISRUPTION PHENOTYPE</scope>
</reference>
<reference evidence="16" key="6">
    <citation type="journal article" date="2008" name="Proc. Natl. Acad. Sci. U.S.A.">
        <title>The inner of the two Muc2 mucin-dependent mucus layers in colon is devoid of bacteria.</title>
        <authorList>
            <person name="Johansson M.E.V."/>
            <person name="Phillipson M."/>
            <person name="Petersson J."/>
            <person name="Velcich A."/>
            <person name="Holm L."/>
            <person name="Hansson G.C."/>
        </authorList>
    </citation>
    <scope>FUNCTION</scope>
    <scope>SUBCELLULAR LOCATION</scope>
    <scope>DISRUPTION PHENOTYPE</scope>
</reference>
<reference evidence="16" key="7">
    <citation type="journal article" date="2009" name="J. Proteome Res.">
        <title>Proteomic analyses of the two mucus layers of the colon barrier reveal that their main component, the Muc2 mucin, is strongly bound to the Fcgbp protein.</title>
        <authorList>
            <person name="Johansson M.E.V."/>
            <person name="Thomsson K.A."/>
            <person name="Hansson G.C."/>
        </authorList>
    </citation>
    <scope>IDENTIFICATION BY MASS SPECTROMETRY</scope>
    <scope>FUNCTION</scope>
    <scope>INTERACTION WITH FCGBP</scope>
    <scope>SUBCELLULAR LOCATION</scope>
</reference>
<reference key="8">
    <citation type="journal article" date="2020" name="Science">
        <title>Proximal colon-derived O-glycosylated mucus encapsulates and modulates the microbiota.</title>
        <authorList>
            <person name="Bergstrom K."/>
            <person name="Shan X."/>
            <person name="Casero D."/>
            <person name="Batushansky A."/>
            <person name="Lagishetty V."/>
            <person name="Jacobs J.P."/>
            <person name="Hoover C."/>
            <person name="Kondo Y."/>
            <person name="Shao B."/>
            <person name="Gao L."/>
            <person name="Zandberg W."/>
            <person name="Noyovitz B."/>
            <person name="McDaniel J.M."/>
            <person name="Gibson D.L."/>
            <person name="Pakpour S."/>
            <person name="Kazemian N."/>
            <person name="McGee S."/>
            <person name="Houchen C.W."/>
            <person name="Rao C.V."/>
            <person name="Griffin T.M."/>
            <person name="Sonnenburg J.L."/>
            <person name="McEver R.P."/>
            <person name="Braun J."/>
            <person name="Xia L."/>
        </authorList>
    </citation>
    <scope>FUNCTION</scope>
    <scope>GLYCOSYLATION</scope>
</reference>
<organism>
    <name type="scientific">Mus musculus</name>
    <name type="common">Mouse</name>
    <dbReference type="NCBI Taxonomy" id="10090"/>
    <lineage>
        <taxon>Eukaryota</taxon>
        <taxon>Metazoa</taxon>
        <taxon>Chordata</taxon>
        <taxon>Craniata</taxon>
        <taxon>Vertebrata</taxon>
        <taxon>Euteleostomi</taxon>
        <taxon>Mammalia</taxon>
        <taxon>Eutheria</taxon>
        <taxon>Euarchontoglires</taxon>
        <taxon>Glires</taxon>
        <taxon>Rodentia</taxon>
        <taxon>Myomorpha</taxon>
        <taxon>Muroidea</taxon>
        <taxon>Muridae</taxon>
        <taxon>Murinae</taxon>
        <taxon>Mus</taxon>
        <taxon>Mus</taxon>
    </lineage>
</organism>
<keyword id="KW-0068">Autocatalytic cleavage</keyword>
<keyword id="KW-0106">Calcium</keyword>
<keyword id="KW-0186">Copper</keyword>
<keyword id="KW-1015">Disulfide bond</keyword>
<keyword id="KW-0325">Glycoprotein</keyword>
<keyword id="KW-0479">Metal-binding</keyword>
<keyword id="KW-0597">Phosphoprotein</keyword>
<keyword id="KW-1185">Reference proteome</keyword>
<keyword id="KW-0677">Repeat</keyword>
<keyword id="KW-0964">Secreted</keyword>
<keyword id="KW-0732">Signal</keyword>
<dbReference type="EMBL" id="AJ511872">
    <property type="protein sequence ID" value="CAD54414.1"/>
    <property type="molecule type" value="Genomic_DNA"/>
</dbReference>
<dbReference type="EMBL" id="AJ511873">
    <property type="protein sequence ID" value="CAD54416.1"/>
    <property type="molecule type" value="Genomic_DNA"/>
</dbReference>
<dbReference type="EMBL" id="AJ511874">
    <property type="protein sequence ID" value="CAD54416.1"/>
    <property type="status" value="JOINED"/>
    <property type="molecule type" value="Genomic_DNA"/>
</dbReference>
<dbReference type="EMBL" id="AF016695">
    <property type="protein sequence ID" value="AAD01593.1"/>
    <property type="molecule type" value="mRNA"/>
</dbReference>
<dbReference type="EMBL" id="BC024540">
    <property type="status" value="NOT_ANNOTATED_CDS"/>
    <property type="molecule type" value="mRNA"/>
</dbReference>
<dbReference type="EMBL" id="BC030862">
    <property type="protein sequence ID" value="AAH30862.1"/>
    <property type="status" value="ALT_INIT"/>
    <property type="molecule type" value="mRNA"/>
</dbReference>
<dbReference type="EMBL" id="BC036168">
    <property type="protein sequence ID" value="AAH36168.1"/>
    <property type="molecule type" value="mRNA"/>
</dbReference>
<dbReference type="EMBL" id="AK008250">
    <property type="protein sequence ID" value="BAB25557.1"/>
    <property type="molecule type" value="mRNA"/>
</dbReference>
<dbReference type="SMR" id="Q80Z19"/>
<dbReference type="FunCoup" id="Q80Z19">
    <property type="interactions" value="59"/>
</dbReference>
<dbReference type="STRING" id="10090.ENSMUSP00000141128"/>
<dbReference type="MEROPS" id="I08.954"/>
<dbReference type="GlyCosmos" id="Q80Z19">
    <property type="glycosylation" value="3 sites, No reported glycans"/>
</dbReference>
<dbReference type="GlyGen" id="Q80Z19">
    <property type="glycosylation" value="74 sites, 1 N-linked glycan (1 site)"/>
</dbReference>
<dbReference type="PhosphoSitePlus" id="Q80Z19"/>
<dbReference type="SwissPalm" id="Q80Z19"/>
<dbReference type="jPOST" id="Q80Z19"/>
<dbReference type="PaxDb" id="10090-ENSMUSP00000141128"/>
<dbReference type="PeptideAtlas" id="Q80Z19"/>
<dbReference type="ProteomicsDB" id="291459"/>
<dbReference type="ProteomicsDB" id="363370"/>
<dbReference type="Ensembl" id="ENSMUST00000185406.8">
    <property type="protein sequence ID" value="ENSMUSP00000141040.3"/>
    <property type="gene ID" value="ENSMUSG00000025515.17"/>
</dbReference>
<dbReference type="UCSC" id="uc029wpp.2">
    <property type="organism name" value="mouse"/>
</dbReference>
<dbReference type="AGR" id="MGI:1339364"/>
<dbReference type="MGI" id="MGI:1339364">
    <property type="gene designation" value="Muc2"/>
</dbReference>
<dbReference type="VEuPathDB" id="HostDB:ENSMUSG00000025515"/>
<dbReference type="eggNOG" id="KOG1216">
    <property type="taxonomic scope" value="Eukaryota"/>
</dbReference>
<dbReference type="GeneTree" id="ENSGT00940000163661"/>
<dbReference type="HOGENOM" id="CLU_000076_6_1_1"/>
<dbReference type="InParanoid" id="Q80Z19"/>
<dbReference type="OMA" id="SVYCCRP"/>
<dbReference type="OrthoDB" id="160294at2759"/>
<dbReference type="TreeFam" id="TF337106"/>
<dbReference type="Reactome" id="R-MMU-913709">
    <property type="pathway name" value="O-linked glycosylation of mucins"/>
</dbReference>
<dbReference type="Reactome" id="R-MMU-977068">
    <property type="pathway name" value="Termination of O-glycan biosynthesis"/>
</dbReference>
<dbReference type="ChiTaRS" id="Muc2">
    <property type="organism name" value="mouse"/>
</dbReference>
<dbReference type="PRO" id="PR:Q80Z19"/>
<dbReference type="Proteomes" id="UP000000589">
    <property type="component" value="Chromosome 7"/>
</dbReference>
<dbReference type="RNAct" id="Q80Z19">
    <property type="molecule type" value="protein"/>
</dbReference>
<dbReference type="Bgee" id="ENSMUSG00000025515">
    <property type="expression patterns" value="Expressed in jejunum and 47 other cell types or tissues"/>
</dbReference>
<dbReference type="GO" id="GO:0062023">
    <property type="term" value="C:collagen-containing extracellular matrix"/>
    <property type="evidence" value="ECO:0007005"/>
    <property type="project" value="BHF-UCL"/>
</dbReference>
<dbReference type="GO" id="GO:0031012">
    <property type="term" value="C:extracellular matrix"/>
    <property type="evidence" value="ECO:0000314"/>
    <property type="project" value="MGI"/>
</dbReference>
<dbReference type="GO" id="GO:0070702">
    <property type="term" value="C:inner mucus layer"/>
    <property type="evidence" value="ECO:0000314"/>
    <property type="project" value="UniProtKB"/>
</dbReference>
<dbReference type="GO" id="GO:0070701">
    <property type="term" value="C:mucus layer"/>
    <property type="evidence" value="ECO:0000314"/>
    <property type="project" value="UniProt"/>
</dbReference>
<dbReference type="GO" id="GO:0070703">
    <property type="term" value="C:outer mucus layer"/>
    <property type="evidence" value="ECO:0000314"/>
    <property type="project" value="UniProtKB"/>
</dbReference>
<dbReference type="GO" id="GO:1903135">
    <property type="term" value="F:cupric ion binding"/>
    <property type="evidence" value="ECO:0000250"/>
    <property type="project" value="UniProtKB"/>
</dbReference>
<dbReference type="GO" id="GO:1903136">
    <property type="term" value="F:cuprous ion binding"/>
    <property type="evidence" value="ECO:0000250"/>
    <property type="project" value="UniProtKB"/>
</dbReference>
<dbReference type="GO" id="GO:0005201">
    <property type="term" value="F:extracellular matrix structural constituent"/>
    <property type="evidence" value="ECO:0000314"/>
    <property type="project" value="UniProt"/>
</dbReference>
<dbReference type="GO" id="GO:0006915">
    <property type="term" value="P:apoptotic process"/>
    <property type="evidence" value="ECO:0000315"/>
    <property type="project" value="MGI"/>
</dbReference>
<dbReference type="GO" id="GO:0010273">
    <property type="term" value="P:detoxification of copper ion"/>
    <property type="evidence" value="ECO:0000250"/>
    <property type="project" value="UniProtKB"/>
</dbReference>
<dbReference type="GO" id="GO:0002064">
    <property type="term" value="P:epithelial cell development"/>
    <property type="evidence" value="ECO:0000315"/>
    <property type="project" value="MGI"/>
</dbReference>
<dbReference type="GO" id="GO:0048874">
    <property type="term" value="P:host-mediated regulation of intestinal microbiota composition"/>
    <property type="evidence" value="ECO:0000314"/>
    <property type="project" value="UniProtKB"/>
</dbReference>
<dbReference type="GO" id="GO:0030277">
    <property type="term" value="P:maintenance of gastrointestinal epithelium"/>
    <property type="evidence" value="ECO:0000314"/>
    <property type="project" value="UniProtKB"/>
</dbReference>
<dbReference type="GO" id="GO:0070254">
    <property type="term" value="P:mucus secretion"/>
    <property type="evidence" value="ECO:0000314"/>
    <property type="project" value="UniProt"/>
</dbReference>
<dbReference type="GO" id="GO:0030336">
    <property type="term" value="P:negative regulation of cell migration"/>
    <property type="evidence" value="ECO:0000315"/>
    <property type="project" value="MGI"/>
</dbReference>
<dbReference type="GO" id="GO:0008285">
    <property type="term" value="P:negative regulation of cell population proliferation"/>
    <property type="evidence" value="ECO:0000315"/>
    <property type="project" value="MGI"/>
</dbReference>
<dbReference type="GO" id="GO:0043065">
    <property type="term" value="P:positive regulation of apoptotic process"/>
    <property type="evidence" value="ECO:0000315"/>
    <property type="project" value="MGI"/>
</dbReference>
<dbReference type="CDD" id="cd19941">
    <property type="entry name" value="TIL"/>
    <property type="match status" value="2"/>
</dbReference>
<dbReference type="FunFam" id="2.10.25.10:FF:000153">
    <property type="entry name" value="MUC5B isoform 1"/>
    <property type="match status" value="1"/>
</dbReference>
<dbReference type="FunFam" id="2.10.25.10:FF:000674">
    <property type="entry name" value="Mucin-2"/>
    <property type="match status" value="1"/>
</dbReference>
<dbReference type="Gene3D" id="2.10.25.10">
    <property type="entry name" value="Laminin"/>
    <property type="match status" value="3"/>
</dbReference>
<dbReference type="InterPro" id="IPR006207">
    <property type="entry name" value="Cys_knot_C"/>
</dbReference>
<dbReference type="InterPro" id="IPR050780">
    <property type="entry name" value="Mucin_vWF_Thrombospondin_sf"/>
</dbReference>
<dbReference type="InterPro" id="IPR036084">
    <property type="entry name" value="Ser_inhib-like_sf"/>
</dbReference>
<dbReference type="InterPro" id="IPR002919">
    <property type="entry name" value="TIL_dom"/>
</dbReference>
<dbReference type="InterPro" id="IPR014853">
    <property type="entry name" value="VWF/SSPO/ZAN-like_Cys-rich_dom"/>
</dbReference>
<dbReference type="InterPro" id="IPR001007">
    <property type="entry name" value="VWF_dom"/>
</dbReference>
<dbReference type="InterPro" id="IPR001846">
    <property type="entry name" value="VWF_type-D"/>
</dbReference>
<dbReference type="InterPro" id="IPR025155">
    <property type="entry name" value="WxxW_domain"/>
</dbReference>
<dbReference type="PANTHER" id="PTHR11339">
    <property type="entry name" value="EXTRACELLULAR MATRIX GLYCOPROTEIN RELATED"/>
    <property type="match status" value="1"/>
</dbReference>
<dbReference type="PANTHER" id="PTHR11339:SF371">
    <property type="entry name" value="MUCIN-2"/>
    <property type="match status" value="1"/>
</dbReference>
<dbReference type="Pfam" id="PF08742">
    <property type="entry name" value="C8"/>
    <property type="match status" value="4"/>
</dbReference>
<dbReference type="Pfam" id="PF13330">
    <property type="entry name" value="Mucin2_WxxW"/>
    <property type="match status" value="2"/>
</dbReference>
<dbReference type="Pfam" id="PF01826">
    <property type="entry name" value="TIL"/>
    <property type="match status" value="1"/>
</dbReference>
<dbReference type="Pfam" id="PF00094">
    <property type="entry name" value="VWD"/>
    <property type="match status" value="4"/>
</dbReference>
<dbReference type="Pfam" id="PF23244">
    <property type="entry name" value="VWF"/>
    <property type="match status" value="2"/>
</dbReference>
<dbReference type="PRINTS" id="PR01217">
    <property type="entry name" value="PRICHEXTENSN"/>
</dbReference>
<dbReference type="SMART" id="SM00832">
    <property type="entry name" value="C8"/>
    <property type="match status" value="4"/>
</dbReference>
<dbReference type="SMART" id="SM00041">
    <property type="entry name" value="CT"/>
    <property type="match status" value="1"/>
</dbReference>
<dbReference type="SMART" id="SM00214">
    <property type="entry name" value="VWC"/>
    <property type="match status" value="4"/>
</dbReference>
<dbReference type="SMART" id="SM00215">
    <property type="entry name" value="VWC_out"/>
    <property type="match status" value="2"/>
</dbReference>
<dbReference type="SMART" id="SM00216">
    <property type="entry name" value="VWD"/>
    <property type="match status" value="4"/>
</dbReference>
<dbReference type="SUPFAM" id="SSF57603">
    <property type="entry name" value="FnI-like domain"/>
    <property type="match status" value="3"/>
</dbReference>
<dbReference type="SUPFAM" id="SSF57567">
    <property type="entry name" value="Serine protease inhibitors"/>
    <property type="match status" value="4"/>
</dbReference>
<dbReference type="PROSITE" id="PS01185">
    <property type="entry name" value="CTCK_1"/>
    <property type="match status" value="1"/>
</dbReference>
<dbReference type="PROSITE" id="PS01225">
    <property type="entry name" value="CTCK_2"/>
    <property type="match status" value="1"/>
</dbReference>
<dbReference type="PROSITE" id="PS01208">
    <property type="entry name" value="VWFC_1"/>
    <property type="match status" value="2"/>
</dbReference>
<dbReference type="PROSITE" id="PS50184">
    <property type="entry name" value="VWFC_2"/>
    <property type="match status" value="2"/>
</dbReference>
<dbReference type="PROSITE" id="PS51233">
    <property type="entry name" value="VWFD"/>
    <property type="match status" value="4"/>
</dbReference>
<feature type="signal peptide" evidence="3">
    <location>
        <begin position="1"/>
        <end position="20"/>
    </location>
</feature>
<feature type="chain" id="PRO_5030002787" description="Mucin-2" evidence="3">
    <location>
        <begin position="21"/>
        <end position="4576"/>
    </location>
</feature>
<feature type="domain" description="VWFD 1" evidence="7">
    <location>
        <begin position="32"/>
        <end position="205"/>
    </location>
</feature>
<feature type="domain" description="TIL" evidence="3">
    <location>
        <begin position="293"/>
        <end position="349"/>
    </location>
</feature>
<feature type="domain" description="VWFD 2" evidence="7">
    <location>
        <begin position="387"/>
        <end position="562"/>
    </location>
</feature>
<feature type="domain" description="VWFD 3" evidence="7">
    <location>
        <begin position="857"/>
        <end position="1026"/>
    </location>
</feature>
<feature type="repeat" description="1" evidence="1">
    <location>
        <begin position="1395"/>
        <end position="1415"/>
    </location>
</feature>
<feature type="repeat" description="2" evidence="1">
    <location>
        <begin position="1416"/>
        <end position="1427"/>
    </location>
</feature>
<feature type="repeat" description="3" evidence="1">
    <location>
        <begin position="1428"/>
        <end position="1437"/>
    </location>
</feature>
<feature type="repeat" description="4" evidence="1">
    <location>
        <begin position="1438"/>
        <end position="1453"/>
    </location>
</feature>
<feature type="repeat" description="5" evidence="1">
    <location>
        <begin position="1454"/>
        <end position="1460"/>
    </location>
</feature>
<feature type="repeat" description="7B" evidence="1">
    <location>
        <begin position="1478"/>
        <end position="1497"/>
    </location>
</feature>
<feature type="repeat" description="8A" evidence="1">
    <location>
        <begin position="1498"/>
        <end position="1510"/>
    </location>
</feature>
<feature type="repeat" description="9B" evidence="1">
    <location>
        <begin position="1530"/>
        <end position="1556"/>
    </location>
</feature>
<feature type="repeat" description="10A" evidence="1">
    <location>
        <begin position="1557"/>
        <end position="1572"/>
    </location>
</feature>
<feature type="repeat" description="10B" evidence="1">
    <location>
        <begin position="1573"/>
        <end position="1588"/>
    </location>
</feature>
<feature type="repeat" description="11A" evidence="1">
    <location>
        <begin position="1589"/>
        <end position="1607"/>
    </location>
</feature>
<feature type="repeat" description="11B" evidence="1">
    <location>
        <begin position="1608"/>
        <end position="1634"/>
    </location>
</feature>
<feature type="repeat" description="12" evidence="1">
    <location>
        <begin position="1635"/>
        <end position="1642"/>
    </location>
</feature>
<feature type="repeat" description="15" evidence="1">
    <location>
        <begin position="1665"/>
        <end position="1681"/>
    </location>
</feature>
<feature type="domain" description="VWFD 4" evidence="7">
    <location>
        <begin position="3880"/>
        <end position="4063"/>
    </location>
</feature>
<feature type="domain" description="VWFC 1" evidence="5">
    <location>
        <begin position="4213"/>
        <end position="4282"/>
    </location>
</feature>
<feature type="domain" description="VWFC 2" evidence="5">
    <location>
        <begin position="4320"/>
        <end position="4387"/>
    </location>
</feature>
<feature type="domain" description="CTCK" evidence="4">
    <location>
        <begin position="4471"/>
        <end position="4556"/>
    </location>
</feature>
<feature type="region of interest" description="Disordered" evidence="8">
    <location>
        <begin position="1395"/>
        <end position="2866"/>
    </location>
</feature>
<feature type="region of interest" description="Disordered" evidence="8">
    <location>
        <begin position="2975"/>
        <end position="3706"/>
    </location>
</feature>
<feature type="region of interest" description="Disordered" evidence="8">
    <location>
        <begin position="3764"/>
        <end position="3806"/>
    </location>
</feature>
<feature type="compositionally biased region" description="Low complexity" evidence="8">
    <location>
        <begin position="2975"/>
        <end position="3623"/>
    </location>
</feature>
<feature type="compositionally biased region" description="Low complexity" evidence="8">
    <location>
        <begin position="3631"/>
        <end position="3706"/>
    </location>
</feature>
<feature type="compositionally biased region" description="Pro residues" evidence="8">
    <location>
        <begin position="3764"/>
        <end position="3774"/>
    </location>
</feature>
<feature type="compositionally biased region" description="Low complexity" evidence="8">
    <location>
        <begin position="3775"/>
        <end position="3806"/>
    </location>
</feature>
<feature type="binding site" evidence="1">
    <location>
        <position position="46"/>
    </location>
    <ligand>
        <name>Ca(2+)</name>
        <dbReference type="ChEBI" id="CHEBI:29108"/>
        <label>1</label>
    </ligand>
</feature>
<feature type="binding site" evidence="1">
    <location>
        <position position="143"/>
    </location>
    <ligand>
        <name>Cu(+)</name>
        <dbReference type="ChEBI" id="CHEBI:49552"/>
    </ligand>
</feature>
<feature type="binding site" evidence="1">
    <location>
        <position position="151"/>
    </location>
    <ligand>
        <name>Cu(+)</name>
        <dbReference type="ChEBI" id="CHEBI:49552"/>
    </ligand>
</feature>
<feature type="binding site" evidence="1">
    <location>
        <position position="153"/>
    </location>
    <ligand>
        <name>Cu(2+)</name>
        <dbReference type="ChEBI" id="CHEBI:29036"/>
    </ligand>
</feature>
<feature type="binding site" evidence="1">
    <location>
        <position position="168"/>
    </location>
    <ligand>
        <name>Ca(2+)</name>
        <dbReference type="ChEBI" id="CHEBI:29108"/>
        <label>1</label>
    </ligand>
</feature>
<feature type="binding site" evidence="1">
    <location>
        <position position="170"/>
    </location>
    <ligand>
        <name>Ca(2+)</name>
        <dbReference type="ChEBI" id="CHEBI:29108"/>
        <label>1</label>
    </ligand>
</feature>
<feature type="binding site" evidence="1">
    <location>
        <position position="177"/>
    </location>
    <ligand>
        <name>Ca(2+)</name>
        <dbReference type="ChEBI" id="CHEBI:29108"/>
        <label>1</label>
    </ligand>
</feature>
<feature type="binding site" evidence="1">
    <location>
        <position position="275"/>
    </location>
    <ligand>
        <name>Cu(2+)</name>
        <dbReference type="ChEBI" id="CHEBI:29036"/>
    </ligand>
</feature>
<feature type="binding site" evidence="1">
    <location>
        <position position="322"/>
    </location>
    <ligand>
        <name>Cu(2+)</name>
        <dbReference type="ChEBI" id="CHEBI:29036"/>
    </ligand>
</feature>
<feature type="binding site" evidence="1">
    <location>
        <position position="324"/>
    </location>
    <ligand>
        <name>Cu(+)</name>
        <dbReference type="ChEBI" id="CHEBI:49552"/>
    </ligand>
</feature>
<feature type="binding site" evidence="1">
    <location>
        <position position="401"/>
    </location>
    <ligand>
        <name>Ca(2+)</name>
        <dbReference type="ChEBI" id="CHEBI:29108"/>
        <label>2</label>
    </ligand>
</feature>
<feature type="binding site" evidence="1">
    <location>
        <position position="528"/>
    </location>
    <ligand>
        <name>Ca(2+)</name>
        <dbReference type="ChEBI" id="CHEBI:29108"/>
        <label>2</label>
    </ligand>
</feature>
<feature type="binding site" evidence="1">
    <location>
        <position position="530"/>
    </location>
    <ligand>
        <name>Ca(2+)</name>
        <dbReference type="ChEBI" id="CHEBI:29108"/>
        <label>2</label>
    </ligand>
</feature>
<feature type="binding site" evidence="1">
    <location>
        <position position="532"/>
    </location>
    <ligand>
        <name>Ca(2+)</name>
        <dbReference type="ChEBI" id="CHEBI:29108"/>
        <label>2</label>
    </ligand>
</feature>
<feature type="binding site" evidence="1">
    <location>
        <position position="535"/>
    </location>
    <ligand>
        <name>Ca(2+)</name>
        <dbReference type="ChEBI" id="CHEBI:29108"/>
        <label>2</label>
    </ligand>
</feature>
<feature type="binding site" evidence="1">
    <location>
        <position position="536"/>
    </location>
    <ligand>
        <name>Ca(2+)</name>
        <dbReference type="ChEBI" id="CHEBI:29108"/>
        <label>2</label>
    </ligand>
</feature>
<feature type="binding site" evidence="1">
    <location>
        <position position="871"/>
    </location>
    <ligand>
        <name>Ca(2+)</name>
        <dbReference type="ChEBI" id="CHEBI:29108"/>
        <label>3</label>
    </ligand>
</feature>
<feature type="binding site" evidence="1">
    <location>
        <position position="992"/>
    </location>
    <ligand>
        <name>Ca(2+)</name>
        <dbReference type="ChEBI" id="CHEBI:29108"/>
        <label>3</label>
    </ligand>
</feature>
<feature type="binding site" evidence="1">
    <location>
        <position position="994"/>
    </location>
    <ligand>
        <name>Ca(2+)</name>
        <dbReference type="ChEBI" id="CHEBI:29108"/>
        <label>3</label>
    </ligand>
</feature>
<feature type="binding site" evidence="1">
    <location>
        <position position="999"/>
    </location>
    <ligand>
        <name>Ca(2+)</name>
        <dbReference type="ChEBI" id="CHEBI:29108"/>
        <label>3</label>
    </ligand>
</feature>
<feature type="binding site" evidence="1">
    <location>
        <position position="1000"/>
    </location>
    <ligand>
        <name>Ca(2+)</name>
        <dbReference type="ChEBI" id="CHEBI:29108"/>
        <label>3</label>
    </ligand>
</feature>
<feature type="binding site" evidence="1">
    <location>
        <position position="1305"/>
    </location>
    <ligand>
        <name>Ca(2+)</name>
        <dbReference type="ChEBI" id="CHEBI:29108"/>
        <label>5</label>
    </ligand>
</feature>
<feature type="binding site" evidence="1">
    <location>
        <position position="1308"/>
    </location>
    <ligand>
        <name>Ca(2+)</name>
        <dbReference type="ChEBI" id="CHEBI:29108"/>
        <label>4</label>
    </ligand>
</feature>
<feature type="binding site" evidence="1">
    <location>
        <position position="1315"/>
    </location>
    <ligand>
        <name>Ca(2+)</name>
        <dbReference type="ChEBI" id="CHEBI:29108"/>
        <label>4</label>
    </ligand>
</feature>
<feature type="binding site" evidence="1">
    <location>
        <position position="1316"/>
    </location>
    <ligand>
        <name>Ca(2+)</name>
        <dbReference type="ChEBI" id="CHEBI:29108"/>
        <label>5</label>
    </ligand>
</feature>
<feature type="binding site" evidence="1">
    <location>
        <position position="1318"/>
    </location>
    <ligand>
        <name>Ca(2+)</name>
        <dbReference type="ChEBI" id="CHEBI:29108"/>
        <label>5</label>
    </ligand>
</feature>
<feature type="binding site" evidence="1">
    <location>
        <position position="1375"/>
    </location>
    <ligand>
        <name>Ca(2+)</name>
        <dbReference type="ChEBI" id="CHEBI:29108"/>
        <label>5</label>
    </ligand>
</feature>
<feature type="binding site" evidence="1">
    <location>
        <position position="1376"/>
    </location>
    <ligand>
        <name>Ca(2+)</name>
        <dbReference type="ChEBI" id="CHEBI:29108"/>
        <label>5</label>
    </ligand>
</feature>
<feature type="site" description="Cleavage; by autolysis; in vitro" evidence="1">
    <location>
        <begin position="3887"/>
        <end position="3888"/>
    </location>
</feature>
<feature type="modified residue" description="Phosphoserine" evidence="1">
    <location>
        <position position="21"/>
    </location>
</feature>
<feature type="glycosylation site" description="N-linked (GlcNAc...) asparagine" evidence="6">
    <location>
        <position position="160"/>
    </location>
</feature>
<feature type="glycosylation site" description="N-linked (GlcNAc...) asparagine" evidence="6">
    <location>
        <position position="421"/>
    </location>
</feature>
<feature type="glycosylation site" description="N-linked (GlcNAc...) asparagine" evidence="6">
    <location>
        <position position="668"/>
    </location>
</feature>
<feature type="glycosylation site" description="N-linked (GlcNAc...) asparagine" evidence="6">
    <location>
        <position position="768"/>
    </location>
</feature>
<feature type="glycosylation site" description="N-linked (GlcNAc...) asparagine" evidence="6">
    <location>
        <position position="838"/>
    </location>
</feature>
<feature type="glycosylation site" description="N-linked (GlcNAc...) asparagine" evidence="6">
    <location>
        <position position="893"/>
    </location>
</feature>
<feature type="glycosylation site" description="N-linked (GlcNAc...) asparagine" evidence="6">
    <location>
        <position position="1137"/>
    </location>
</feature>
<feature type="glycosylation site" description="N-linked (GlcNAc...) asparagine" evidence="6">
    <location>
        <position position="1152"/>
    </location>
</feature>
<feature type="glycosylation site" description="N-linked (GlcNAc...) asparagine" evidence="6">
    <location>
        <position position="1213"/>
    </location>
</feature>
<feature type="glycosylation site" description="N-linked (GlcNAc...) asparagine" evidence="6">
    <location>
        <position position="1228"/>
    </location>
</feature>
<feature type="glycosylation site" description="N-linked (GlcNAc...) asparagine" evidence="6">
    <location>
        <position position="1244"/>
    </location>
</feature>
<feature type="glycosylation site" description="O-linked (GalNAc) threonine" evidence="1">
    <location>
        <position position="1265"/>
    </location>
</feature>
<feature type="glycosylation site" description="O-linked (GalNAc) threonine" evidence="1">
    <location>
        <position position="1268"/>
    </location>
</feature>
<feature type="glycosylation site" description="O-linked (GalNAc) threonine" evidence="1">
    <location>
        <position position="1269"/>
    </location>
</feature>
<feature type="glycosylation site" description="O-linked (GalNAc) threonine" evidence="1">
    <location>
        <position position="1281"/>
    </location>
</feature>
<feature type="glycosylation site" description="O-linked (GalNAc) threonine" evidence="1">
    <location>
        <position position="1292"/>
    </location>
</feature>
<feature type="glycosylation site" description="N-linked (GlcNAc...) asparagine" evidence="6">
    <location>
        <position position="1352"/>
    </location>
</feature>
<feature type="glycosylation site" description="N-linked (GlcNAc...) asparagine" evidence="6">
    <location>
        <position position="2529"/>
    </location>
</feature>
<feature type="glycosylation site" description="N-linked (GlcNAc...) asparagine" evidence="6">
    <location>
        <position position="2910"/>
    </location>
</feature>
<feature type="glycosylation site" description="N-linked (GlcNAc...) asparagine" evidence="6">
    <location>
        <position position="3734"/>
    </location>
</feature>
<feature type="glycosylation site" description="N-linked (GlcNAc...) asparagine" evidence="6">
    <location>
        <position position="3745"/>
    </location>
</feature>
<feature type="glycosylation site" description="N-linked (GlcNAc...) asparagine" evidence="6">
    <location>
        <position position="3756"/>
    </location>
</feature>
<feature type="glycosylation site" description="N-linked (GlcNAc...) asparagine" evidence="6">
    <location>
        <position position="3823"/>
    </location>
</feature>
<feature type="glycosylation site" description="N-linked (GlcNAc...) asparagine" evidence="6">
    <location>
        <position position="3830"/>
    </location>
</feature>
<feature type="glycosylation site" description="N-linked (GlcNAc...) asparagine" evidence="6">
    <location>
        <position position="3903"/>
    </location>
</feature>
<feature type="glycosylation site" description="N-linked (GlcNAc...) asparagine" evidence="6">
    <location>
        <position position="3991"/>
    </location>
</feature>
<feature type="glycosylation site" description="N-linked (GlcNAc...) asparagine" evidence="6">
    <location>
        <position position="4017"/>
    </location>
</feature>
<feature type="glycosylation site" description="N-linked (GlcNAc...) asparagine" evidence="6">
    <location>
        <position position="4028"/>
    </location>
</feature>
<feature type="glycosylation site" description="N-linked (GlcNAc...) asparagine" evidence="6">
    <location>
        <position position="4083"/>
    </location>
</feature>
<feature type="glycosylation site" description="N-linked (GlcNAc...) asparagine" evidence="6">
    <location>
        <position position="4149"/>
    </location>
</feature>
<feature type="glycosylation site" description="N-linked (GlcNAc...) asparagine" evidence="6">
    <location>
        <position position="4183"/>
    </location>
</feature>
<feature type="glycosylation site" description="N-linked (GlcNAc...) asparagine" evidence="6">
    <location>
        <position position="4254"/>
    </location>
</feature>
<feature type="glycosylation site" description="N-linked (GlcNAc...) asparagine" evidence="6">
    <location>
        <position position="4277"/>
    </location>
</feature>
<feature type="glycosylation site" description="N-linked (GlcNAc...) asparagine" evidence="6">
    <location>
        <position position="4351"/>
    </location>
</feature>
<feature type="glycosylation site" description="N-linked (GlcNAc...) asparagine" evidence="6">
    <location>
        <position position="4366"/>
    </location>
</feature>
<feature type="glycosylation site" description="N-linked (GlcNAc...) asparagine" evidence="6">
    <location>
        <position position="4434"/>
    </location>
</feature>
<feature type="glycosylation site" description="N-linked (GlcNAc...) asparagine" evidence="6">
    <location>
        <position position="4465"/>
    </location>
</feature>
<feature type="glycosylation site" description="N-linked (GlcNAc...) asparagine" evidence="6">
    <location>
        <position position="4488"/>
    </location>
</feature>
<feature type="disulfide bond" evidence="1 7">
    <location>
        <begin position="34"/>
        <end position="166"/>
    </location>
</feature>
<feature type="disulfide bond" evidence="1 7">
    <location>
        <begin position="56"/>
        <end position="204"/>
    </location>
</feature>
<feature type="disulfide bond" evidence="1">
    <location>
        <begin position="64"/>
        <end position="163"/>
    </location>
</feature>
<feature type="disulfide bond" evidence="1">
    <location>
        <begin position="216"/>
        <end position="253"/>
    </location>
</feature>
<feature type="disulfide bond" evidence="1">
    <location>
        <begin position="223"/>
        <end position="248"/>
    </location>
</feature>
<feature type="disulfide bond" evidence="1">
    <location>
        <begin position="235"/>
        <end position="273"/>
    </location>
</feature>
<feature type="disulfide bond" evidence="1">
    <location>
        <begin position="255"/>
        <end position="261"/>
    </location>
</feature>
<feature type="disulfide bond" evidence="1">
    <location>
        <begin position="263"/>
        <end position="289"/>
    </location>
</feature>
<feature type="disulfide bond" evidence="1">
    <location>
        <begin position="293"/>
        <end position="327"/>
    </location>
</feature>
<feature type="disulfide bond" evidence="1">
    <location>
        <begin position="306"/>
        <end position="319"/>
    </location>
</feature>
<feature type="disulfide bond" evidence="1">
    <location>
        <begin position="310"/>
        <end position="349"/>
    </location>
</feature>
<feature type="disulfide bond" evidence="1">
    <location>
        <begin position="329"/>
        <end position="343"/>
    </location>
</feature>
<feature type="disulfide bond" evidence="1">
    <location>
        <begin position="351"/>
        <end position="373"/>
    </location>
</feature>
<feature type="disulfide bond" evidence="1">
    <location>
        <begin position="368"/>
        <end position="385"/>
    </location>
</feature>
<feature type="disulfide bond" evidence="1">
    <location>
        <begin position="371"/>
        <end position="380"/>
    </location>
</feature>
<feature type="disulfide bond" evidence="1 7">
    <location>
        <begin position="389"/>
        <end position="526"/>
    </location>
</feature>
<feature type="disulfide bond" evidence="1 7">
    <location>
        <begin position="411"/>
        <end position="561"/>
    </location>
</feature>
<feature type="disulfide bond" evidence="1 7">
    <location>
        <begin position="433"/>
        <end position="441"/>
    </location>
</feature>
<feature type="disulfide bond" evidence="1">
    <location>
        <begin position="572"/>
        <end position="617"/>
    </location>
</feature>
<feature type="disulfide bond" evidence="1">
    <location>
        <begin position="586"/>
        <end position="612"/>
    </location>
</feature>
<feature type="disulfide bond" evidence="1">
    <location>
        <begin position="599"/>
        <end position="637"/>
    </location>
</feature>
<feature type="disulfide bond" evidence="1">
    <location>
        <begin position="619"/>
        <end position="625"/>
    </location>
</feature>
<feature type="disulfide bond" evidence="1">
    <location>
        <begin position="627"/>
        <end position="652"/>
    </location>
</feature>
<feature type="disulfide bond" evidence="1">
    <location>
        <begin position="659"/>
        <end position="696"/>
    </location>
</feature>
<feature type="disulfide bond" evidence="1">
    <location>
        <begin position="672"/>
        <end position="686"/>
    </location>
</feature>
<feature type="disulfide bond" evidence="1">
    <location>
        <begin position="676"/>
        <end position="716"/>
    </location>
</feature>
<feature type="disulfide bond" evidence="1">
    <location>
        <begin position="698"/>
        <end position="710"/>
    </location>
</feature>
<feature type="disulfide bond" evidence="1">
    <location>
        <begin position="718"/>
        <end position="740"/>
    </location>
</feature>
<feature type="disulfide bond" evidence="1">
    <location>
        <begin position="738"/>
        <end position="747"/>
    </location>
</feature>
<feature type="disulfide bond" evidence="1">
    <location>
        <begin position="782"/>
        <end position="818"/>
    </location>
</feature>
<feature type="disulfide bond" evidence="1">
    <location>
        <begin position="800"/>
        <end position="812"/>
    </location>
</feature>
<feature type="disulfide bond" evidence="1">
    <location>
        <begin position="820"/>
        <end position="843"/>
    </location>
</feature>
<feature type="disulfide bond" evidence="1">
    <location>
        <begin position="837"/>
        <end position="855"/>
    </location>
</feature>
<feature type="disulfide bond" evidence="1">
    <location>
        <begin position="841"/>
        <end position="850"/>
    </location>
</feature>
<feature type="disulfide bond" evidence="1 7">
    <location>
        <begin position="859"/>
        <end position="990"/>
    </location>
</feature>
<feature type="disulfide bond" evidence="1 7">
    <location>
        <begin position="881"/>
        <end position="1025"/>
    </location>
</feature>
<feature type="disulfide bond" evidence="1 7">
    <location>
        <begin position="890"/>
        <end position="987"/>
    </location>
</feature>
<feature type="disulfide bond" evidence="1 7">
    <location>
        <begin position="907"/>
        <end position="914"/>
    </location>
</feature>
<feature type="disulfide bond" evidence="1">
    <location>
        <begin position="1035"/>
        <end position="1078"/>
    </location>
</feature>
<feature type="disulfide bond" evidence="1">
    <location>
        <begin position="1049"/>
        <end position="1073"/>
    </location>
</feature>
<feature type="disulfide bond" evidence="1">
    <location>
        <begin position="1060"/>
        <end position="1100"/>
    </location>
</feature>
<feature type="disulfide bond" evidence="1">
    <location>
        <begin position="1080"/>
        <end position="1088"/>
    </location>
</feature>
<feature type="disulfide bond" description="Interchain" evidence="1">
    <location>
        <position position="1086"/>
    </location>
</feature>
<feature type="disulfide bond" evidence="1">
    <location>
        <begin position="1090"/>
        <end position="1115"/>
    </location>
</feature>
<feature type="disulfide bond" evidence="1">
    <location>
        <begin position="1106"/>
        <end position="1135"/>
    </location>
</feature>
<feature type="disulfide bond" evidence="1">
    <location>
        <begin position="1119"/>
        <end position="1161"/>
    </location>
</feature>
<feature type="disulfide bond" description="Interchain" evidence="1">
    <location>
        <position position="1128"/>
    </location>
</feature>
<feature type="disulfide bond" evidence="1">
    <location>
        <begin position="1143"/>
        <end position="1185"/>
    </location>
</feature>
<feature type="disulfide bond" evidence="1">
    <location>
        <begin position="1165"/>
        <end position="1179"/>
    </location>
</feature>
<feature type="disulfide bond" evidence="1">
    <location>
        <begin position="1187"/>
        <end position="1211"/>
    </location>
</feature>
<feature type="disulfide bond" evidence="1">
    <location>
        <begin position="1206"/>
        <end position="1236"/>
    </location>
</feature>
<feature type="disulfide bond" evidence="1">
    <location>
        <begin position="1209"/>
        <end position="1219"/>
    </location>
</feature>
<feature type="disulfide bond" evidence="7">
    <location>
        <begin position="3882"/>
        <end position="4023"/>
    </location>
</feature>
<feature type="disulfide bond" evidence="7">
    <location>
        <begin position="3904"/>
        <end position="4062"/>
    </location>
</feature>
<feature type="disulfide bond" evidence="7">
    <location>
        <begin position="3928"/>
        <end position="3936"/>
    </location>
</feature>
<feature type="disulfide bond" evidence="4">
    <location>
        <begin position="4471"/>
        <end position="4518"/>
    </location>
</feature>
<feature type="disulfide bond" evidence="4">
    <location>
        <begin position="4485"/>
        <end position="4532"/>
    </location>
</feature>
<feature type="disulfide bond" evidence="4">
    <location>
        <begin position="4494"/>
        <end position="4548"/>
    </location>
</feature>
<feature type="disulfide bond" evidence="4">
    <location>
        <begin position="4498"/>
        <end position="4550"/>
    </location>
</feature>
<feature type="sequence conflict" description="In Ref. 2; AAD01593." evidence="16" ref="2">
    <original>E</original>
    <variation>G</variation>
    <location>
        <position position="301"/>
    </location>
</feature>
<feature type="sequence conflict" description="In Ref. 3; AAH36168." evidence="16" ref="3">
    <original>T</original>
    <variation>P</variation>
    <location>
        <position position="4294"/>
    </location>
</feature>
<comment type="function">
    <text evidence="1 11 12 13">Coats the epithelia of the intestines and other mucus membrane-containing organs to provide a protective, lubricating barrier against particles and infectious agents at mucosal surfaces (PubMed:18806221, PubMed:19432394, PubMed:33093110). Major constituent of the colon mucus, which is mainly formed by large polymeric networks of MUC2 secreted by goblet cells that cover the exposed surfaces of intestine (PubMed:18806221, PubMed:19432394, PubMed:33093110). MUC2 networks form hydrogels that guard the underlying epithelium from pathogens and other hazardous matter entering from the outside world, while permitting nutrient absorption and gas exchange (PubMed:18806221, PubMed:19432394). Acts as a divalent copper chaperone that protects intestinal cells from copper toxicity and facilitates nutritional copper unptake into cells (By similarity). Binds both Cu(2+) and its reduced form, Cu(1+), at two juxtaposed binding sites: Cu(2+), once reduced to Cu(1+) by vitamin C (ascorbate) or other dietary antioxidants, transits to the other binding site (By similarity). MUC2-bound Cu(1+) is protected from oxidation in aerobic environments, and can be released for nutritional delivery to cells (By similarity). Mucin gels store antimicrobial molecules that participate in innate immunity (PubMed:18806221, PubMed:19432394). Mucin glycoproteins also house and feed the microbiome, lubricate tissue surfaces, and may facilitate the removal of contaminants and waste products from the body (PubMed:33093110). Goblet cells synthesize two forms of MUC2 mucin that differ in branched chain O-glycosylation and the site of production in the colon: a (1) 'thick' mucus that wraps the microbiota to form fecal pellets is produced in the proximal, ascending colon (PubMed:33093110). 'Thick' mucus transits along the descending colon and is lubricated by a (2) 'thin' MUC2 mucus produced in the distal colon which adheres to the 'thick' mucus (PubMed:33093110).</text>
</comment>
<comment type="subunit">
    <text evidence="1 2 12">Homomultimer; disulfide-linked. The N- and C-terminus mediate their assembly into higher order structures to form filaments (By similarity). The CTCK domains of two polypeptides associate in the endoplasmic reticulum to generate intermolecularly disulfide-bonded dimers (By similarity). These dimers progress to the Golgi apparatus, which is a more acidic environment than the endoplasmic reticulum (By similarity). Under acidic conditions, the N-termini form non-covalent intermolecular interactions that juxtapose assemblies of the third VWD domain (VWD3) from different CTCK-linked dimers (By similarity). The VWD3 assemblies then become disulfide bonded to one another to produce long, disulfide-linked polymers that remain highly compact until secretion (By similarity). Interacts with FCGBP (PubMed:19432394). Interacts with AGR2; disulfide-linked (By similarity).</text>
</comment>
<comment type="subcellular location">
    <subcellularLocation>
        <location evidence="11 12">Secreted</location>
    </subcellularLocation>
    <text evidence="1 11 12">In the intestine, secreted into the inner and outer mucus layers (PubMed:18806221, PubMed:19432394). Before secretion, mucin polymers are stored in dedicated secretory vesicles (By similarity).</text>
</comment>
<comment type="tissue specificity">
    <text evidence="10 14">Highly expressed in goblet cells of the colon with lower levels in the small intestine and no expression in the stomach (at protein level).</text>
</comment>
<comment type="domain">
    <text evidence="2">The CTCK domain mediates interchain disulfide bonds with another molecule of MUC2.</text>
</comment>
<comment type="PTM">
    <text evidence="1 13 14">O-glycosylated (PubMed:9886986). O-glycosylation is required for mucin assembly (By similarity). Goblet cells synthesize two forms of mucin that differ in branched chain O-glycosylation and the site of production in the colon (PubMed:33093110).</text>
</comment>
<comment type="PTM">
    <text evidence="11">May undergo proteolytic cleavage in the outer mucus layer of the colon, contributing to the expanded volume and loose nature of this layer which allows for bacterial colonization in contrast to the inner mucus layer which is dense and devoid of bacteria.</text>
</comment>
<comment type="PTM">
    <text evidence="1">At low pH of 6 and under, undergoes autocatalytic cleavage in vitro in the N-terminal region of the fourth VWD domain. It is likely that this also occurs in vivo and is triggered by the low pH of the late secretory pathway.</text>
</comment>
<comment type="disruption phenotype">
    <text evidence="9 11">Aberrant intestinal crypt morphology and altered cell maturation and migration (PubMed:11872843). Frequent development of adenomas in the small intestine which progress to invasive adenocarcinomas, as well as rectal tumors (PubMed:11872843). Absence of inner and outer mucus layers in the colon so that bacteria are in direct contact with the colon epithelium and enter into the cells and crypts in contrast to wild-type animals which are devoid of bacteria in the inner mucus layer (PubMed:18806221).</text>
</comment>
<comment type="sequence caution" evidence="16">
    <conflict type="erroneous initiation">
        <sequence resource="EMBL-CDS" id="AAH30862"/>
    </conflict>
</comment>
<comment type="online information" name="Mucin database">
    <link uri="http://www.medkem.gu.se/mucinbiology/databases/"/>
</comment>
<name>MUC2_MOUSE</name>
<accession>Q80Z19</accession>
<accession>A0A087WSG8</accession>
<accession>Q0P637</accession>
<accession>Q80Z17</accession>
<accession>Q8K0Q1</accession>
<accession>Q9CVG8</accession>
<accession>Q9Z2U5</accession>
<protein>
    <recommendedName>
        <fullName evidence="15">Mucin-2</fullName>
        <shortName evidence="15">MUC-2</shortName>
    </recommendedName>
    <alternativeName>
        <fullName evidence="15">Colonic mucin</fullName>
        <shortName evidence="15">MCM</shortName>
    </alternativeName>
    <alternativeName>
        <fullName evidence="20">Secreted gel-forming mucin</fullName>
    </alternativeName>
</protein>